<gene>
    <name evidence="11" type="primary">sarA</name>
    <name evidence="8" type="synonym">gogC</name>
    <name evidence="9" type="synonym">pagJ</name>
    <name evidence="10" type="synonym">steE</name>
    <name evidence="11" type="synonym">stm2585</name>
    <name type="ordered locus">STM14_3166</name>
</gene>
<protein>
    <recommendedName>
        <fullName evidence="11">Salmonella anti-inflammatory response activator</fullName>
        <shortName evidence="11">SarA</shortName>
    </recommendedName>
    <alternativeName>
        <fullName evidence="10">Salmonella translocated effector E</fullName>
    </alternativeName>
</protein>
<proteinExistence type="evidence at protein level"/>
<evidence type="ECO:0000255" key="1"/>
<evidence type="ECO:0000269" key="2">
    <source>
    </source>
</evidence>
<evidence type="ECO:0000269" key="3">
    <source>
    </source>
</evidence>
<evidence type="ECO:0000269" key="4">
    <source>
    </source>
</evidence>
<evidence type="ECO:0000269" key="5">
    <source>
    </source>
</evidence>
<evidence type="ECO:0000269" key="6">
    <source>
    </source>
</evidence>
<evidence type="ECO:0000269" key="7">
    <source>
    </source>
</evidence>
<evidence type="ECO:0000303" key="8">
    <source>
    </source>
</evidence>
<evidence type="ECO:0000303" key="9">
    <source>
    </source>
</evidence>
<evidence type="ECO:0000303" key="10">
    <source>
    </source>
</evidence>
<evidence type="ECO:0000303" key="11">
    <source>
    </source>
</evidence>
<evidence type="ECO:0000305" key="12"/>
<evidence type="ECO:0000305" key="13">
    <source>
    </source>
</evidence>
<evidence type="ECO:0000305" key="14">
    <source>
    </source>
</evidence>
<accession>A0A0F6B506</accession>
<keyword id="KW-1035">Host cytoplasm</keyword>
<keyword id="KW-0472">Membrane</keyword>
<keyword id="KW-0812">Transmembrane</keyword>
<keyword id="KW-1133">Transmembrane helix</keyword>
<keyword id="KW-0843">Virulence</keyword>
<sequence length="181" mass="20006">MMRFVYIYILVIYGSYLWFSLGGNMFTINSTNRVASTIAPYACVSDVNLEDKATFLDEHTSIHANDSSLQCFVLNDQHVPQNTLATDVEGYNRGLQERISLEYQPLESIVFLLGTPAVLETKESLSLPVSPDALTQKLLSISSNDECKLSGSTSCTTPASHNPPSGYIAQYRHSAEVFPDE</sequence>
<reference key="1">
    <citation type="journal article" date="2010" name="J. Bacteriol.">
        <title>Short-term signatures of evolutionary change in the Salmonella enterica serovar typhimurium 14028 genome.</title>
        <authorList>
            <person name="Jarvik T."/>
            <person name="Smillie C."/>
            <person name="Groisman E.A."/>
            <person name="Ochman H."/>
        </authorList>
    </citation>
    <scope>NUCLEOTIDE SEQUENCE [LARGE SCALE GENOMIC DNA]</scope>
    <source>
        <strain>14028s / SGSC 2262</strain>
    </source>
</reference>
<reference key="2">
    <citation type="journal article" date="2001" name="Mol. Microbiol.">
        <title>Variable assortment of prophages provides a transferable repertoire of pathogenic determinants in Salmonella.</title>
        <authorList>
            <person name="Figueroa-Bossi N."/>
            <person name="Uzzau S."/>
            <person name="Maloriol D."/>
            <person name="Bossi L."/>
        </authorList>
    </citation>
    <scope>GENE NAME</scope>
    <source>
        <strain>14028s / SGSC 2262</strain>
    </source>
</reference>
<reference key="3">
    <citation type="journal article" date="2001" name="Proc. Natl. Acad. Sci. U.S.A.">
        <title>Epitope tagging of chromosomal genes in Salmonella.</title>
        <authorList>
            <person name="Uzzau S."/>
            <person name="Figueroa-Bossi N."/>
            <person name="Rubino S."/>
            <person name="Bossi L."/>
        </authorList>
    </citation>
    <scope>INDUCTION</scope>
    <source>
        <strain>14028s / SGSC 2262</strain>
    </source>
</reference>
<reference key="4">
    <citation type="journal article" date="2005" name="Mol. Microbiol.">
        <title>Co-regulation of Salmonella enterica genes required for virulence and resistance to antimicrobial peptides by SlyA and PhoP/PhoQ.</title>
        <authorList>
            <person name="Navarre W.W."/>
            <person name="Halsey T.A."/>
            <person name="Walthers D."/>
            <person name="Frye J."/>
            <person name="McClelland M."/>
            <person name="Potter J.L."/>
            <person name="Kenney L.J."/>
            <person name="Gunn J.S."/>
            <person name="Fang F.C."/>
            <person name="Libby S.J."/>
        </authorList>
    </citation>
    <scope>INDUCTION</scope>
    <source>
        <strain>14028s / SGSC 2262</strain>
    </source>
</reference>
<reference key="5">
    <citation type="journal article" date="2011" name="Infect. Immun.">
        <title>Discovery of novel secreted virulence factors from Salmonella enterica serovar Typhimurium by proteomic analysis of culture supernatants.</title>
        <authorList>
            <person name="Niemann G.S."/>
            <person name="Brown R.N."/>
            <person name="Gustin J.K."/>
            <person name="Stufkens A."/>
            <person name="Shaikh-Kidwai A.S."/>
            <person name="Li J."/>
            <person name="McDermott J.E."/>
            <person name="Brewer H.M."/>
            <person name="Schepmoes A."/>
            <person name="Smith R.D."/>
            <person name="Adkins J.N."/>
            <person name="Heffron F."/>
        </authorList>
    </citation>
    <scope>SUBCELLULAR LOCATION</scope>
    <source>
        <strain>ATCC 14028 / SGSC 2980 / CDC 6516-60 / NCTC 12023</strain>
    </source>
</reference>
<reference key="6">
    <citation type="journal article" date="2013" name="Infect. Immun.">
        <title>Novel determinants of intestinal colonization of Salmonella enterica serotype typhimurium identified in bovine enteric infection.</title>
        <authorList>
            <person name="Elfenbein J.R."/>
            <person name="Endicott-Yazdani T."/>
            <person name="Porwollik S."/>
            <person name="Bogomolnaya L.M."/>
            <person name="Cheng P."/>
            <person name="Guo J."/>
            <person name="Zheng Y."/>
            <person name="Yang H.J."/>
            <person name="Talamantes M."/>
            <person name="Shields C."/>
            <person name="Maple A."/>
            <person name="Ragoza Y."/>
            <person name="DeAtley K."/>
            <person name="Tatsch T."/>
            <person name="Cui P."/>
            <person name="Andrews K.D."/>
            <person name="McClelland M."/>
            <person name="Lawhon S.D."/>
            <person name="Andrews-Polymenis H."/>
        </authorList>
    </citation>
    <scope>DISRUPTION PHENOTYPE</scope>
    <source>
        <strain>ATCC 14028 / SGSC 2980 / CDC 6516-60 / NCTC 12023</strain>
    </source>
</reference>
<reference key="7">
    <citation type="journal article" date="2018" name="Cell Rep.">
        <title>Salmonella Activation of STAT3 Signaling by SarA Effector Promotes Intracellular Replication and Production of IL-10.</title>
        <authorList>
            <person name="Jaslow S.L."/>
            <person name="Gibbs K.D."/>
            <person name="Fricke W.F."/>
            <person name="Wang L."/>
            <person name="Pittman K.J."/>
            <person name="Mammel M.K."/>
            <person name="Thaden J.T."/>
            <person name="Fowler V.G. Jr."/>
            <person name="Hammer G.E."/>
            <person name="Elfenbein J.R."/>
            <person name="Ko D.C."/>
        </authorList>
    </citation>
    <scope>FUNCTION</scope>
    <scope>INTERACTION WITH HUMAN STAT3</scope>
    <scope>SUBCELLULAR LOCATION</scope>
    <scope>DISRUPTION PHENOTYPE</scope>
    <source>
        <strain>14028s / SGSC 2262</strain>
    </source>
</reference>
<dbReference type="EMBL" id="CP001363">
    <property type="protein sequence ID" value="ACY89597.1"/>
    <property type="molecule type" value="Genomic_DNA"/>
</dbReference>
<dbReference type="KEGG" id="seo:STM14_3166"/>
<dbReference type="HOGENOM" id="CLU_128668_0_0_6"/>
<dbReference type="BioCyc" id="SENT588858:STM14_RS26100-MONOMER"/>
<dbReference type="PHI-base" id="PHI:123365"/>
<dbReference type="Proteomes" id="UP000002695">
    <property type="component" value="Chromosome"/>
</dbReference>
<dbReference type="GO" id="GO:0030430">
    <property type="term" value="C:host cell cytoplasm"/>
    <property type="evidence" value="ECO:0007669"/>
    <property type="project" value="UniProtKB-SubCell"/>
</dbReference>
<dbReference type="GO" id="GO:0016020">
    <property type="term" value="C:membrane"/>
    <property type="evidence" value="ECO:0007669"/>
    <property type="project" value="UniProtKB-SubCell"/>
</dbReference>
<organism>
    <name type="scientific">Salmonella typhimurium (strain 14028s / SGSC 2262)</name>
    <dbReference type="NCBI Taxonomy" id="588858"/>
    <lineage>
        <taxon>Bacteria</taxon>
        <taxon>Pseudomonadati</taxon>
        <taxon>Pseudomonadota</taxon>
        <taxon>Gammaproteobacteria</taxon>
        <taxon>Enterobacterales</taxon>
        <taxon>Enterobacteriaceae</taxon>
        <taxon>Salmonella</taxon>
    </lineage>
</organism>
<name>SARA_SALT1</name>
<comment type="function">
    <text evidence="7 14">A Salmonella strain-specific effector that induces a host STAT3-dependent anti-inflammatory pathway. In bacteria-infected host cells (human) leads to phosphorylation of host STAT3, at least on 'Tyr-705' and interleukin-10 (IL-10, IL10) production; expressing the gene alone in host cells induces STAT3 phosphorylation and IL-10 production. IL-10 production requires STAT3 in infected cells. Contributes to virulence in mouse infection models (PubMed:29924996). Encoded in only a few S.typhimurium serovars, it may be a specific effector for adaptation to bovine hosts (Probable).</text>
</comment>
<comment type="subunit">
    <text evidence="7">Interacts with host (human) STAT3.</text>
</comment>
<comment type="subcellular location">
    <subcellularLocation>
        <location evidence="1">Membrane</location>
        <topology evidence="1">Single-pass membrane protein</topology>
    </subcellularLocation>
    <subcellularLocation>
        <location evidence="5 7">Host cytoplasm</location>
    </subcellularLocation>
    <text evidence="5 7">Secreted mainly by the SPI-2 type III secretion system (T3SS), with a minor contribution from the SPI-1 T3SS.</text>
</comment>
<comment type="induction">
    <text evidence="3 4">Expressed during normal cell growth and in bacteria growing in a human cell line (at protein level) (PubMed:11742086). Transcription activated by SlyA, which is dependent on PhoP.</text>
</comment>
<comment type="disruption phenotype">
    <text evidence="6 7">No visible phenotype in a 12 hour, calf ligated ileal loop infection model (PubMed:24019407). No bacterial growth phenotype; bacteria no longer induce IL-10 induction in human B cell lines. Bacteria grow slightly less well in human cell lines 24 hours post-infection. Deletion leads to greatly decreased phosphorylation of STAT3 in infected human cells. In mouse infections (C57BL/6 and CBA/J mice) deletion mutant bacteria are less virulent and less competitive with wild-type bacteria, mice have a reduced bacterial burden following intraperitoneal or oral infection, while mouse STAT3 is less phosphorylated (PubMed:29924996).</text>
</comment>
<comment type="miscellaneous">
    <text evidence="2">Encoded by the Gifsy-1 prophage.</text>
</comment>
<comment type="miscellaneous">
    <text evidence="12 13">Also called pagJ, but this gene name had been previously given to a different gene (AC O30647).</text>
</comment>
<feature type="chain" id="PRO_0000448231" description="Salmonella anti-inflammatory response activator">
    <location>
        <begin position="1"/>
        <end position="181"/>
    </location>
</feature>
<feature type="transmembrane region" description="Helical" evidence="1">
    <location>
        <begin position="4"/>
        <end position="24"/>
    </location>
</feature>